<accession>Q4JSC2</accession>
<sequence>MLAPQYRLRSTALFGQTIRNGRKKGSRTVVVHVLAGGSRAEELPLPLQEGATAGPRMGLVVSKAVGNAVTRHNTSRKLRHAFRAVMEEDSLDFPVGTTVVIRALPKSATASFEELVGDVRSCIRRALPR</sequence>
<organism>
    <name type="scientific">Corynebacterium jeikeium (strain K411)</name>
    <dbReference type="NCBI Taxonomy" id="306537"/>
    <lineage>
        <taxon>Bacteria</taxon>
        <taxon>Bacillati</taxon>
        <taxon>Actinomycetota</taxon>
        <taxon>Actinomycetes</taxon>
        <taxon>Mycobacteriales</taxon>
        <taxon>Corynebacteriaceae</taxon>
        <taxon>Corynebacterium</taxon>
    </lineage>
</organism>
<comment type="function">
    <text evidence="1">RNaseP catalyzes the removal of the 5'-leader sequence from pre-tRNA to produce the mature 5'-terminus. It can also cleave other RNA substrates such as 4.5S RNA. The protein component plays an auxiliary but essential role in vivo by binding to the 5'-leader sequence and broadening the substrate specificity of the ribozyme.</text>
</comment>
<comment type="catalytic activity">
    <reaction evidence="1">
        <text>Endonucleolytic cleavage of RNA, removing 5'-extranucleotides from tRNA precursor.</text>
        <dbReference type="EC" id="3.1.26.5"/>
    </reaction>
</comment>
<comment type="subunit">
    <text evidence="1">Consists of a catalytic RNA component (M1 or rnpB) and a protein subunit.</text>
</comment>
<comment type="similarity">
    <text evidence="1">Belongs to the RnpA family.</text>
</comment>
<dbReference type="EC" id="3.1.26.5" evidence="1"/>
<dbReference type="EMBL" id="CR931997">
    <property type="protein sequence ID" value="CAI38285.1"/>
    <property type="molecule type" value="Genomic_DNA"/>
</dbReference>
<dbReference type="RefSeq" id="WP_011274351.1">
    <property type="nucleotide sequence ID" value="NC_007164.1"/>
</dbReference>
<dbReference type="SMR" id="Q4JSC2"/>
<dbReference type="STRING" id="306537.jk2103"/>
<dbReference type="GeneID" id="92739735"/>
<dbReference type="KEGG" id="cjk:jk2103"/>
<dbReference type="eggNOG" id="COG0594">
    <property type="taxonomic scope" value="Bacteria"/>
</dbReference>
<dbReference type="HOGENOM" id="CLU_117179_4_1_11"/>
<dbReference type="OrthoDB" id="196964at2"/>
<dbReference type="Proteomes" id="UP000000545">
    <property type="component" value="Chromosome"/>
</dbReference>
<dbReference type="GO" id="GO:0030677">
    <property type="term" value="C:ribonuclease P complex"/>
    <property type="evidence" value="ECO:0007669"/>
    <property type="project" value="TreeGrafter"/>
</dbReference>
<dbReference type="GO" id="GO:0042781">
    <property type="term" value="F:3'-tRNA processing endoribonuclease activity"/>
    <property type="evidence" value="ECO:0007669"/>
    <property type="project" value="TreeGrafter"/>
</dbReference>
<dbReference type="GO" id="GO:0004526">
    <property type="term" value="F:ribonuclease P activity"/>
    <property type="evidence" value="ECO:0007669"/>
    <property type="project" value="UniProtKB-UniRule"/>
</dbReference>
<dbReference type="GO" id="GO:0000049">
    <property type="term" value="F:tRNA binding"/>
    <property type="evidence" value="ECO:0007669"/>
    <property type="project" value="UniProtKB-UniRule"/>
</dbReference>
<dbReference type="GO" id="GO:0001682">
    <property type="term" value="P:tRNA 5'-leader removal"/>
    <property type="evidence" value="ECO:0007669"/>
    <property type="project" value="UniProtKB-UniRule"/>
</dbReference>
<dbReference type="Gene3D" id="3.30.230.10">
    <property type="match status" value="1"/>
</dbReference>
<dbReference type="HAMAP" id="MF_00227">
    <property type="entry name" value="RNase_P"/>
    <property type="match status" value="1"/>
</dbReference>
<dbReference type="InterPro" id="IPR020568">
    <property type="entry name" value="Ribosomal_Su5_D2-typ_SF"/>
</dbReference>
<dbReference type="InterPro" id="IPR014721">
    <property type="entry name" value="Ribsml_uS5_D2-typ_fold_subgr"/>
</dbReference>
<dbReference type="InterPro" id="IPR000100">
    <property type="entry name" value="RNase_P"/>
</dbReference>
<dbReference type="NCBIfam" id="TIGR00188">
    <property type="entry name" value="rnpA"/>
    <property type="match status" value="1"/>
</dbReference>
<dbReference type="PANTHER" id="PTHR33992">
    <property type="entry name" value="RIBONUCLEASE P PROTEIN COMPONENT"/>
    <property type="match status" value="1"/>
</dbReference>
<dbReference type="PANTHER" id="PTHR33992:SF1">
    <property type="entry name" value="RIBONUCLEASE P PROTEIN COMPONENT"/>
    <property type="match status" value="1"/>
</dbReference>
<dbReference type="Pfam" id="PF00825">
    <property type="entry name" value="Ribonuclease_P"/>
    <property type="match status" value="1"/>
</dbReference>
<dbReference type="SUPFAM" id="SSF54211">
    <property type="entry name" value="Ribosomal protein S5 domain 2-like"/>
    <property type="match status" value="1"/>
</dbReference>
<keyword id="KW-0255">Endonuclease</keyword>
<keyword id="KW-0378">Hydrolase</keyword>
<keyword id="KW-0540">Nuclease</keyword>
<keyword id="KW-1185">Reference proteome</keyword>
<keyword id="KW-0694">RNA-binding</keyword>
<keyword id="KW-0819">tRNA processing</keyword>
<evidence type="ECO:0000255" key="1">
    <source>
        <dbReference type="HAMAP-Rule" id="MF_00227"/>
    </source>
</evidence>
<feature type="chain" id="PRO_1000021402" description="Ribonuclease P protein component">
    <location>
        <begin position="1"/>
        <end position="129"/>
    </location>
</feature>
<gene>
    <name evidence="1" type="primary">rnpA</name>
    <name type="ordered locus">jk2103</name>
</gene>
<reference key="1">
    <citation type="journal article" date="2005" name="J. Bacteriol.">
        <title>Complete genome sequence and analysis of the multiresistant nosocomial pathogen Corynebacterium jeikeium K411, a lipid-requiring bacterium of the human skin flora.</title>
        <authorList>
            <person name="Tauch A."/>
            <person name="Kaiser O."/>
            <person name="Hain T."/>
            <person name="Goesmann A."/>
            <person name="Weisshaar B."/>
            <person name="Albersmeier A."/>
            <person name="Bekel T."/>
            <person name="Bischoff N."/>
            <person name="Brune I."/>
            <person name="Chakraborty T."/>
            <person name="Kalinowski J."/>
            <person name="Meyer F."/>
            <person name="Rupp O."/>
            <person name="Schneiker S."/>
            <person name="Viehoever P."/>
            <person name="Puehler A."/>
        </authorList>
    </citation>
    <scope>NUCLEOTIDE SEQUENCE [LARGE SCALE GENOMIC DNA]</scope>
    <source>
        <strain>K411</strain>
    </source>
</reference>
<name>RNPA_CORJK</name>
<proteinExistence type="inferred from homology"/>
<protein>
    <recommendedName>
        <fullName evidence="1">Ribonuclease P protein component</fullName>
        <shortName evidence="1">RNase P protein</shortName>
        <shortName evidence="1">RNaseP protein</shortName>
        <ecNumber evidence="1">3.1.26.5</ecNumber>
    </recommendedName>
    <alternativeName>
        <fullName evidence="1">Protein C5</fullName>
    </alternativeName>
</protein>